<keyword id="KW-0002">3D-structure</keyword>
<keyword id="KW-0456">Lyase</keyword>
<keyword id="KW-1185">Reference proteome</keyword>
<accession>Q5SHD6</accession>
<sequence length="126" mass="13380">MKALALIAHDAKKDEMVAFCLRHKDVLARYPLLATGTTGARIQEATGLAVERVLSGPLGGDLQIGARVAEGKVLAVVFLQDPLTAKPHEPDVQALMRVCNVHGVPLATNLVAAEALIAWIRKGTPQ</sequence>
<feature type="chain" id="PRO_1000017830" description="Methylglyoxal synthase">
    <location>
        <begin position="1"/>
        <end position="126"/>
    </location>
</feature>
<feature type="domain" description="MGS-like" evidence="1">
    <location>
        <begin position="1"/>
        <end position="126"/>
    </location>
</feature>
<feature type="active site" description="Proton donor/acceptor" evidence="1">
    <location>
        <position position="61"/>
    </location>
</feature>
<feature type="binding site" evidence="1">
    <location>
        <position position="9"/>
    </location>
    <ligand>
        <name>substrate</name>
    </ligand>
</feature>
<feature type="binding site" evidence="1">
    <location>
        <position position="13"/>
    </location>
    <ligand>
        <name>substrate</name>
    </ligand>
</feature>
<feature type="binding site" evidence="1">
    <location>
        <begin position="35"/>
        <end position="38"/>
    </location>
    <ligand>
        <name>substrate</name>
    </ligand>
</feature>
<feature type="binding site" evidence="1">
    <location>
        <begin position="55"/>
        <end position="56"/>
    </location>
    <ligand>
        <name>substrate</name>
    </ligand>
</feature>
<feature type="binding site" evidence="1">
    <location>
        <position position="88"/>
    </location>
    <ligand>
        <name>substrate</name>
    </ligand>
</feature>
<feature type="strand" evidence="2">
    <location>
        <begin position="3"/>
        <end position="8"/>
    </location>
</feature>
<feature type="helix" evidence="2">
    <location>
        <begin position="10"/>
        <end position="12"/>
    </location>
</feature>
<feature type="helix" evidence="2">
    <location>
        <begin position="13"/>
        <end position="22"/>
    </location>
</feature>
<feature type="helix" evidence="2">
    <location>
        <begin position="24"/>
        <end position="27"/>
    </location>
</feature>
<feature type="strand" evidence="2">
    <location>
        <begin position="32"/>
        <end position="34"/>
    </location>
</feature>
<feature type="helix" evidence="2">
    <location>
        <begin position="36"/>
        <end position="46"/>
    </location>
</feature>
<feature type="turn" evidence="2">
    <location>
        <begin position="56"/>
        <end position="59"/>
    </location>
</feature>
<feature type="helix" evidence="2">
    <location>
        <begin position="60"/>
        <end position="69"/>
    </location>
</feature>
<feature type="strand" evidence="2">
    <location>
        <begin position="73"/>
        <end position="79"/>
    </location>
</feature>
<feature type="helix" evidence="2">
    <location>
        <begin position="89"/>
        <end position="101"/>
    </location>
</feature>
<feature type="helix" evidence="2">
    <location>
        <begin position="110"/>
        <end position="122"/>
    </location>
</feature>
<evidence type="ECO:0000255" key="1">
    <source>
        <dbReference type="HAMAP-Rule" id="MF_00549"/>
    </source>
</evidence>
<evidence type="ECO:0007829" key="2">
    <source>
        <dbReference type="PDB" id="1WO8"/>
    </source>
</evidence>
<protein>
    <recommendedName>
        <fullName evidence="1">Methylglyoxal synthase</fullName>
        <shortName evidence="1">MGS</shortName>
        <ecNumber evidence="1">4.2.3.3</ecNumber>
    </recommendedName>
</protein>
<proteinExistence type="evidence at protein level"/>
<comment type="function">
    <text evidence="1">Catalyzes the formation of methylglyoxal from dihydroxyacetone phosphate.</text>
</comment>
<comment type="catalytic activity">
    <reaction evidence="1">
        <text>dihydroxyacetone phosphate = methylglyoxal + phosphate</text>
        <dbReference type="Rhea" id="RHEA:17937"/>
        <dbReference type="ChEBI" id="CHEBI:17158"/>
        <dbReference type="ChEBI" id="CHEBI:43474"/>
        <dbReference type="ChEBI" id="CHEBI:57642"/>
        <dbReference type="EC" id="4.2.3.3"/>
    </reaction>
</comment>
<comment type="similarity">
    <text evidence="1">Belongs to the methylglyoxal synthase family.</text>
</comment>
<dbReference type="EC" id="4.2.3.3" evidence="1"/>
<dbReference type="EMBL" id="AP008226">
    <property type="protein sequence ID" value="BAD71617.1"/>
    <property type="molecule type" value="Genomic_DNA"/>
</dbReference>
<dbReference type="RefSeq" id="WP_011228922.1">
    <property type="nucleotide sequence ID" value="NC_006461.1"/>
</dbReference>
<dbReference type="RefSeq" id="YP_145060.1">
    <property type="nucleotide sequence ID" value="NC_006461.1"/>
</dbReference>
<dbReference type="PDB" id="1WO8">
    <property type="method" value="X-ray"/>
    <property type="resolution" value="1.70 A"/>
    <property type="chains" value="A/B/C/D/E/F=1-126"/>
</dbReference>
<dbReference type="PDBsum" id="1WO8"/>
<dbReference type="SMR" id="Q5SHD6"/>
<dbReference type="EnsemblBacteria" id="BAD71617">
    <property type="protein sequence ID" value="BAD71617"/>
    <property type="gene ID" value="BAD71617"/>
</dbReference>
<dbReference type="GeneID" id="3168681"/>
<dbReference type="KEGG" id="ttj:TTHA1794"/>
<dbReference type="PATRIC" id="fig|300852.9.peg.1765"/>
<dbReference type="eggNOG" id="COG1803">
    <property type="taxonomic scope" value="Bacteria"/>
</dbReference>
<dbReference type="HOGENOM" id="CLU_120420_1_0_0"/>
<dbReference type="PhylomeDB" id="Q5SHD6"/>
<dbReference type="EvolutionaryTrace" id="Q5SHD6"/>
<dbReference type="Proteomes" id="UP000000532">
    <property type="component" value="Chromosome"/>
</dbReference>
<dbReference type="GO" id="GO:0005829">
    <property type="term" value="C:cytosol"/>
    <property type="evidence" value="ECO:0007669"/>
    <property type="project" value="TreeGrafter"/>
</dbReference>
<dbReference type="GO" id="GO:0008929">
    <property type="term" value="F:methylglyoxal synthase activity"/>
    <property type="evidence" value="ECO:0007669"/>
    <property type="project" value="UniProtKB-UniRule"/>
</dbReference>
<dbReference type="GO" id="GO:0019242">
    <property type="term" value="P:methylglyoxal biosynthetic process"/>
    <property type="evidence" value="ECO:0007669"/>
    <property type="project" value="UniProtKB-UniRule"/>
</dbReference>
<dbReference type="CDD" id="cd01422">
    <property type="entry name" value="MGS"/>
    <property type="match status" value="1"/>
</dbReference>
<dbReference type="Gene3D" id="3.40.50.1380">
    <property type="entry name" value="Methylglyoxal synthase-like domain"/>
    <property type="match status" value="1"/>
</dbReference>
<dbReference type="HAMAP" id="MF_00549">
    <property type="entry name" value="Methylglyoxal_synth"/>
    <property type="match status" value="1"/>
</dbReference>
<dbReference type="InterPro" id="IPR004363">
    <property type="entry name" value="Methylgl_synth"/>
</dbReference>
<dbReference type="InterPro" id="IPR018148">
    <property type="entry name" value="Methylglyoxal_synth_AS"/>
</dbReference>
<dbReference type="InterPro" id="IPR011607">
    <property type="entry name" value="MGS-like_dom"/>
</dbReference>
<dbReference type="InterPro" id="IPR036914">
    <property type="entry name" value="MGS-like_dom_sf"/>
</dbReference>
<dbReference type="NCBIfam" id="TIGR00160">
    <property type="entry name" value="MGSA"/>
    <property type="match status" value="1"/>
</dbReference>
<dbReference type="NCBIfam" id="NF003559">
    <property type="entry name" value="PRK05234.1"/>
    <property type="match status" value="1"/>
</dbReference>
<dbReference type="PANTHER" id="PTHR30492">
    <property type="entry name" value="METHYLGLYOXAL SYNTHASE"/>
    <property type="match status" value="1"/>
</dbReference>
<dbReference type="PANTHER" id="PTHR30492:SF0">
    <property type="entry name" value="METHYLGLYOXAL SYNTHASE"/>
    <property type="match status" value="1"/>
</dbReference>
<dbReference type="Pfam" id="PF02142">
    <property type="entry name" value="MGS"/>
    <property type="match status" value="1"/>
</dbReference>
<dbReference type="PIRSF" id="PIRSF006614">
    <property type="entry name" value="Methylglyox_syn"/>
    <property type="match status" value="1"/>
</dbReference>
<dbReference type="SMART" id="SM00851">
    <property type="entry name" value="MGS"/>
    <property type="match status" value="1"/>
</dbReference>
<dbReference type="SUPFAM" id="SSF52335">
    <property type="entry name" value="Methylglyoxal synthase-like"/>
    <property type="match status" value="1"/>
</dbReference>
<dbReference type="PROSITE" id="PS01335">
    <property type="entry name" value="METHYLGLYOXAL_SYNTH"/>
    <property type="match status" value="1"/>
</dbReference>
<dbReference type="PROSITE" id="PS51855">
    <property type="entry name" value="MGS"/>
    <property type="match status" value="1"/>
</dbReference>
<gene>
    <name evidence="1" type="primary">mgsA</name>
    <name type="ordered locus">TTHA1794</name>
</gene>
<organism>
    <name type="scientific">Thermus thermophilus (strain ATCC 27634 / DSM 579 / HB8)</name>
    <dbReference type="NCBI Taxonomy" id="300852"/>
    <lineage>
        <taxon>Bacteria</taxon>
        <taxon>Thermotogati</taxon>
        <taxon>Deinococcota</taxon>
        <taxon>Deinococci</taxon>
        <taxon>Thermales</taxon>
        <taxon>Thermaceae</taxon>
        <taxon>Thermus</taxon>
    </lineage>
</organism>
<reference key="1">
    <citation type="submission" date="2004-11" db="EMBL/GenBank/DDBJ databases">
        <title>Complete genome sequence of Thermus thermophilus HB8.</title>
        <authorList>
            <person name="Masui R."/>
            <person name="Kurokawa K."/>
            <person name="Nakagawa N."/>
            <person name="Tokunaga F."/>
            <person name="Koyama Y."/>
            <person name="Shibata T."/>
            <person name="Oshima T."/>
            <person name="Yokoyama S."/>
            <person name="Yasunaga T."/>
            <person name="Kuramitsu S."/>
        </authorList>
    </citation>
    <scope>NUCLEOTIDE SEQUENCE [LARGE SCALE GENOMIC DNA]</scope>
    <source>
        <strain>ATCC 27634 / DSM 579 / HB8</strain>
    </source>
</reference>
<reference key="2">
    <citation type="submission" date="2005-08" db="PDB data bank">
        <title>Crystal structure of methylglyoxal synthase from Thermus thermophilus HB8.</title>
        <authorList>
            <consortium name="RIKEN structural genomics initiative (RSGI)"/>
        </authorList>
    </citation>
    <scope>X-RAY CRYSTALLOGRAPHY (1.7 ANGSTROMS)</scope>
</reference>
<name>MGSA_THET8</name>